<proteinExistence type="inferred from homology"/>
<keyword id="KW-0963">Cytoplasm</keyword>
<keyword id="KW-0597">Phosphoprotein</keyword>
<keyword id="KW-1185">Reference proteome</keyword>
<organism>
    <name type="scientific">Drosophila pseudoobscura pseudoobscura</name>
    <name type="common">Fruit fly</name>
    <dbReference type="NCBI Taxonomy" id="46245"/>
    <lineage>
        <taxon>Eukaryota</taxon>
        <taxon>Metazoa</taxon>
        <taxon>Ecdysozoa</taxon>
        <taxon>Arthropoda</taxon>
        <taxon>Hexapoda</taxon>
        <taxon>Insecta</taxon>
        <taxon>Pterygota</taxon>
        <taxon>Neoptera</taxon>
        <taxon>Endopterygota</taxon>
        <taxon>Diptera</taxon>
        <taxon>Brachycera</taxon>
        <taxon>Muscomorpha</taxon>
        <taxon>Ephydroidea</taxon>
        <taxon>Drosophilidae</taxon>
        <taxon>Drosophila</taxon>
        <taxon>Sophophora</taxon>
    </lineage>
</organism>
<reference key="1">
    <citation type="journal article" date="2005" name="Genome Res.">
        <title>Comparative genome sequencing of Drosophila pseudoobscura: chromosomal, gene, and cis-element evolution.</title>
        <authorList>
            <person name="Richards S."/>
            <person name="Liu Y."/>
            <person name="Bettencourt B.R."/>
            <person name="Hradecky P."/>
            <person name="Letovsky S."/>
            <person name="Nielsen R."/>
            <person name="Thornton K."/>
            <person name="Hubisz M.J."/>
            <person name="Chen R."/>
            <person name="Meisel R.P."/>
            <person name="Couronne O."/>
            <person name="Hua S."/>
            <person name="Smith M.A."/>
            <person name="Zhang P."/>
            <person name="Liu J."/>
            <person name="Bussemaker H.J."/>
            <person name="van Batenburg M.F."/>
            <person name="Howells S.L."/>
            <person name="Scherer S.E."/>
            <person name="Sodergren E."/>
            <person name="Matthews B.B."/>
            <person name="Crosby M.A."/>
            <person name="Schroeder A.J."/>
            <person name="Ortiz-Barrientos D."/>
            <person name="Rives C.M."/>
            <person name="Metzker M.L."/>
            <person name="Muzny D.M."/>
            <person name="Scott G."/>
            <person name="Steffen D."/>
            <person name="Wheeler D.A."/>
            <person name="Worley K.C."/>
            <person name="Havlak P."/>
            <person name="Durbin K.J."/>
            <person name="Egan A."/>
            <person name="Gill R."/>
            <person name="Hume J."/>
            <person name="Morgan M.B."/>
            <person name="Miner G."/>
            <person name="Hamilton C."/>
            <person name="Huang Y."/>
            <person name="Waldron L."/>
            <person name="Verduzco D."/>
            <person name="Clerc-Blankenburg K.P."/>
            <person name="Dubchak I."/>
            <person name="Noor M.A.F."/>
            <person name="Anderson W."/>
            <person name="White K.P."/>
            <person name="Clark A.G."/>
            <person name="Schaeffer S.W."/>
            <person name="Gelbart W.M."/>
            <person name="Weinstock G.M."/>
            <person name="Gibbs R.A."/>
        </authorList>
    </citation>
    <scope>NUCLEOTIDE SEQUENCE [LARGE SCALE GENOMIC DNA]</scope>
    <source>
        <strain>MV2-25 / Tucson 14011-0121.94</strain>
    </source>
</reference>
<sequence>MSNSQANAGSSGSADEPTLNPSGSATLVPNLTTTNASSQATPASTIPQQQQPQQSQPQPQPQPPPHIVGASTADAGGGVGVVVAGGSEGVNLDSSPRESGDDSEDESEILEESPCGRWLKRREEVDQRDVPGIDCVHLAMDTEEGVEVVWNEVQYANMQELKSQEEKMRQVFDNLLQLDHQNIVKFHRYWTDTQQAERPRVIFITEYMSSGSLKQFLKRTKRNAKRLPLESWRRWCTQILSALSYLHSCTPPIIHGNLTCDSIFIQHNGLVKIGSVVPDAVHYSVRRQWDRESAREQERERGAHYFQAPEYGAAEQLTAALDIYAFGMCALEMAALEIQPSNSESTAINEETIQRTICSLESDLQRDLIEKCLNPQPQGRPSANDLLFHPLLFEVHSLKLLTAHCLVFSPANRTMFSETAFDGLMQRYYQPDVIMAQLMSGGQERQYRLADVAGADKLEKFVEDVKYGVYPLITYNGKKPPNFRSRAASPERADSVKSATPEPVDTESRRIVNMMCSVKIKEDSNDIIMTILLRMDDKMNRQLTCQVNENDTAADLTSELVRLGFVHLDDQDKIEVLLEETLKAGVMSDGAGAESSGAGVTTTATMAALEQLERNWSISDADKTMGSSMSSPATAMMYVPQDQQQYQQQQQEADVDQSGTTSN</sequence>
<accession>Q297L2</accession>
<feature type="chain" id="PRO_0000351197" description="Nuclear receptor-binding protein homolog">
    <location>
        <begin position="1"/>
        <end position="663"/>
    </location>
</feature>
<feature type="domain" description="Protein kinase" evidence="5">
    <location>
        <begin position="122"/>
        <end position="392"/>
    </location>
</feature>
<feature type="region of interest" description="Disordered" evidence="6">
    <location>
        <begin position="1"/>
        <end position="112"/>
    </location>
</feature>
<feature type="region of interest" description="Disordered" evidence="6">
    <location>
        <begin position="481"/>
        <end position="505"/>
    </location>
</feature>
<feature type="region of interest" description="Disordered" evidence="6">
    <location>
        <begin position="638"/>
        <end position="663"/>
    </location>
</feature>
<feature type="compositionally biased region" description="Low complexity" evidence="6">
    <location>
        <begin position="1"/>
        <end position="14"/>
    </location>
</feature>
<feature type="compositionally biased region" description="Polar residues" evidence="6">
    <location>
        <begin position="19"/>
        <end position="46"/>
    </location>
</feature>
<feature type="compositionally biased region" description="Low complexity" evidence="6">
    <location>
        <begin position="47"/>
        <end position="57"/>
    </location>
</feature>
<feature type="compositionally biased region" description="Low complexity" evidence="6">
    <location>
        <begin position="81"/>
        <end position="94"/>
    </location>
</feature>
<feature type="compositionally biased region" description="Acidic residues" evidence="6">
    <location>
        <begin position="101"/>
        <end position="111"/>
    </location>
</feature>
<feature type="compositionally biased region" description="Low complexity" evidence="6">
    <location>
        <begin position="641"/>
        <end position="652"/>
    </location>
</feature>
<feature type="modified residue" description="Phosphoserine" evidence="3">
    <location>
        <position position="489"/>
    </location>
</feature>
<feature type="modified residue" description="Phosphoserine" evidence="3">
    <location>
        <position position="495"/>
    </location>
</feature>
<feature type="modified residue" description="Phosphoserine" evidence="3">
    <location>
        <position position="498"/>
    </location>
</feature>
<feature type="modified residue" description="Phosphothreonine" evidence="3">
    <location>
        <position position="500"/>
    </location>
</feature>
<dbReference type="EMBL" id="CM000070">
    <property type="protein sequence ID" value="EAL28193.2"/>
    <property type="molecule type" value="Genomic_DNA"/>
</dbReference>
<dbReference type="RefSeq" id="XP_001359050.2">
    <property type="nucleotide sequence ID" value="XM_001359013.4"/>
</dbReference>
<dbReference type="SMR" id="Q297L2"/>
<dbReference type="FunCoup" id="Q297L2">
    <property type="interactions" value="2039"/>
</dbReference>
<dbReference type="STRING" id="46245.Q297L2"/>
<dbReference type="EnsemblMetazoa" id="FBtr0285738">
    <property type="protein sequence ID" value="FBpp0284176"/>
    <property type="gene ID" value="FBgn0070741"/>
</dbReference>
<dbReference type="GeneID" id="4802057"/>
<dbReference type="KEGG" id="dpo:4802057"/>
<dbReference type="CTD" id="40710"/>
<dbReference type="eggNOG" id="KOG1266">
    <property type="taxonomic scope" value="Eukaryota"/>
</dbReference>
<dbReference type="HOGENOM" id="CLU_024273_0_0_1"/>
<dbReference type="InParanoid" id="Q297L2"/>
<dbReference type="OMA" id="NEVQYAQ"/>
<dbReference type="Proteomes" id="UP000001819">
    <property type="component" value="Chromosome 2"/>
</dbReference>
<dbReference type="Bgee" id="FBgn0070741">
    <property type="expression patterns" value="Expressed in female reproductive system and 3 other cell types or tissues"/>
</dbReference>
<dbReference type="GO" id="GO:0005938">
    <property type="term" value="C:cell cortex"/>
    <property type="evidence" value="ECO:0007669"/>
    <property type="project" value="UniProtKB-SubCell"/>
</dbReference>
<dbReference type="GO" id="GO:0012505">
    <property type="term" value="C:endomembrane system"/>
    <property type="evidence" value="ECO:0000250"/>
    <property type="project" value="UniProtKB"/>
</dbReference>
<dbReference type="GO" id="GO:0005524">
    <property type="term" value="F:ATP binding"/>
    <property type="evidence" value="ECO:0007669"/>
    <property type="project" value="InterPro"/>
</dbReference>
<dbReference type="GO" id="GO:0042803">
    <property type="term" value="F:protein homodimerization activity"/>
    <property type="evidence" value="ECO:0000250"/>
    <property type="project" value="UniProtKB"/>
</dbReference>
<dbReference type="GO" id="GO:0004672">
    <property type="term" value="F:protein kinase activity"/>
    <property type="evidence" value="ECO:0007669"/>
    <property type="project" value="InterPro"/>
</dbReference>
<dbReference type="GO" id="GO:0006888">
    <property type="term" value="P:endoplasmic reticulum to Golgi vesicle-mediated transport"/>
    <property type="evidence" value="ECO:0000250"/>
    <property type="project" value="UniProtKB"/>
</dbReference>
<dbReference type="CDD" id="cd13984">
    <property type="entry name" value="PK_NRBP1_like"/>
    <property type="match status" value="1"/>
</dbReference>
<dbReference type="FunFam" id="1.10.510.10:FF:000842">
    <property type="entry name" value="Nuclear receptor-binding protein"/>
    <property type="match status" value="1"/>
</dbReference>
<dbReference type="FunFam" id="3.30.200.20:FF:000098">
    <property type="entry name" value="Nuclear receptor-binding protein 1"/>
    <property type="match status" value="1"/>
</dbReference>
<dbReference type="Gene3D" id="3.30.200.20">
    <property type="entry name" value="Phosphorylase Kinase, domain 1"/>
    <property type="match status" value="1"/>
</dbReference>
<dbReference type="Gene3D" id="1.10.510.10">
    <property type="entry name" value="Transferase(Phosphotransferase) domain 1"/>
    <property type="match status" value="1"/>
</dbReference>
<dbReference type="InterPro" id="IPR011009">
    <property type="entry name" value="Kinase-like_dom_sf"/>
</dbReference>
<dbReference type="InterPro" id="IPR000719">
    <property type="entry name" value="Prot_kinase_dom"/>
</dbReference>
<dbReference type="InterPro" id="IPR001245">
    <property type="entry name" value="Ser-Thr/Tyr_kinase_cat_dom"/>
</dbReference>
<dbReference type="InterPro" id="IPR050588">
    <property type="entry name" value="WNK_Ser-Thr_kinase"/>
</dbReference>
<dbReference type="PANTHER" id="PTHR13902">
    <property type="entry name" value="SERINE/THREONINE-PROTEIN KINASE WNK WITH NO LYSINE -RELATED"/>
    <property type="match status" value="1"/>
</dbReference>
<dbReference type="Pfam" id="PF07714">
    <property type="entry name" value="PK_Tyr_Ser-Thr"/>
    <property type="match status" value="1"/>
</dbReference>
<dbReference type="SUPFAM" id="SSF56112">
    <property type="entry name" value="Protein kinase-like (PK-like)"/>
    <property type="match status" value="1"/>
</dbReference>
<dbReference type="PROSITE" id="PS50011">
    <property type="entry name" value="PROTEIN_KINASE_DOM"/>
    <property type="match status" value="1"/>
</dbReference>
<comment type="function">
    <text evidence="1">May play a role in subcellular trafficking between the endoplasmic reticulum and Golgi apparatus.</text>
</comment>
<comment type="subcellular location">
    <subcellularLocation>
        <location evidence="2">Cytoplasm</location>
        <location evidence="2">Cell cortex</location>
    </subcellularLocation>
</comment>
<comment type="domain">
    <text evidence="4">The protein kinase domain is predicted to be catalytically inactive.</text>
</comment>
<comment type="similarity">
    <text evidence="5">Belongs to the protein kinase superfamily. Ser/Thr protein kinase family.</text>
</comment>
<name>NRBP_DROPS</name>
<protein>
    <recommendedName>
        <fullName>Nuclear receptor-binding protein homolog</fullName>
    </recommendedName>
    <alternativeName>
        <fullName>MLF1-adaptor molecule</fullName>
    </alternativeName>
</protein>
<evidence type="ECO:0000250" key="1"/>
<evidence type="ECO:0000250" key="2">
    <source>
        <dbReference type="UniProtKB" id="Q9UHY1"/>
    </source>
</evidence>
<evidence type="ECO:0000250" key="3">
    <source>
        <dbReference type="UniProtKB" id="Q9Y0Y6"/>
    </source>
</evidence>
<evidence type="ECO:0000255" key="4"/>
<evidence type="ECO:0000255" key="5">
    <source>
        <dbReference type="PROSITE-ProRule" id="PRU00159"/>
    </source>
</evidence>
<evidence type="ECO:0000256" key="6">
    <source>
        <dbReference type="SAM" id="MobiDB-lite"/>
    </source>
</evidence>
<gene>
    <name evidence="3" type="primary">Madm</name>
    <name type="ORF">GA10685</name>
</gene>